<name>OLCE_PENCN</name>
<keyword id="KW-0274">FAD</keyword>
<keyword id="KW-0285">Flavoprotein</keyword>
<keyword id="KW-0472">Membrane</keyword>
<keyword id="KW-0503">Monooxygenase</keyword>
<keyword id="KW-0560">Oxidoreductase</keyword>
<keyword id="KW-0812">Transmembrane</keyword>
<keyword id="KW-1133">Transmembrane helix</keyword>
<sequence length="465" mass="52098">MEPKDFKVIIIGGSVAGLTLALSLNKIGIDYVVLEKRAHIAPQEGASIGILPHGGRILEQLGLFEAVERSIEPLHTAHIRFPDGFEYTTASPSVLNDRFGLPLAFLERQKMLQILFDAQTEKSKILCGKKVTKIEDFEESMTVYTEDGSTYTGDLVVGADGVHSQVRTEMWRLAEKMQPGIVSNTEKSSMTVQYTCVFGISAAVPGLVPGEQVASFNDKRSFLTFPGKNGRVFWFLINRLDQEHSYSSAPRFSMKDTETICHQFLEDIIYGDVRFNDLWSRKEVCSVTALEEGAFRTWSYRRIVCIGDSMHKMAPNTGQGANCAIEDVAALANMLHACVVTTERHCKPTTKELSTLLEGYTKRRFHRIKKIYQASRLVVRLQARETLLLRMMGRYYIPRSGDVPADVASKMIAGAVALDFLPIPSRSGPGWISFKTMESRLRYWIVGGAIPVLLIMSMWLWQVVL</sequence>
<feature type="chain" id="PRO_0000453891" description="FAD-dependent monooxygenase olcE">
    <location>
        <begin position="1"/>
        <end position="465"/>
    </location>
</feature>
<feature type="transmembrane region" description="Helical" evidence="2">
    <location>
        <begin position="9"/>
        <end position="29"/>
    </location>
</feature>
<feature type="binding site" evidence="1">
    <location>
        <position position="35"/>
    </location>
    <ligand>
        <name>FAD</name>
        <dbReference type="ChEBI" id="CHEBI:57692"/>
    </ligand>
</feature>
<feature type="binding site" evidence="1">
    <location>
        <position position="49"/>
    </location>
    <ligand>
        <name>FAD</name>
        <dbReference type="ChEBI" id="CHEBI:57692"/>
    </ligand>
</feature>
<feature type="binding site" evidence="1">
    <location>
        <position position="108"/>
    </location>
    <ligand>
        <name>FAD</name>
        <dbReference type="ChEBI" id="CHEBI:57692"/>
    </ligand>
</feature>
<feature type="binding site" evidence="1">
    <location>
        <position position="308"/>
    </location>
    <ligand>
        <name>FAD</name>
        <dbReference type="ChEBI" id="CHEBI:57692"/>
    </ligand>
</feature>
<feature type="binding site" evidence="1">
    <location>
        <position position="321"/>
    </location>
    <ligand>
        <name>FAD</name>
        <dbReference type="ChEBI" id="CHEBI:57692"/>
    </ligand>
</feature>
<dbReference type="EC" id="1.-.-.-" evidence="3"/>
<dbReference type="SMR" id="P9WEQ4"/>
<dbReference type="UniPathway" id="UPA00213"/>
<dbReference type="GO" id="GO:0016020">
    <property type="term" value="C:membrane"/>
    <property type="evidence" value="ECO:0007669"/>
    <property type="project" value="UniProtKB-SubCell"/>
</dbReference>
<dbReference type="GO" id="GO:0071949">
    <property type="term" value="F:FAD binding"/>
    <property type="evidence" value="ECO:0007669"/>
    <property type="project" value="InterPro"/>
</dbReference>
<dbReference type="GO" id="GO:0004497">
    <property type="term" value="F:monooxygenase activity"/>
    <property type="evidence" value="ECO:0007669"/>
    <property type="project" value="UniProtKB-KW"/>
</dbReference>
<dbReference type="GO" id="GO:0016114">
    <property type="term" value="P:terpenoid biosynthetic process"/>
    <property type="evidence" value="ECO:0007669"/>
    <property type="project" value="UniProtKB-UniPathway"/>
</dbReference>
<dbReference type="Gene3D" id="3.50.50.60">
    <property type="entry name" value="FAD/NAD(P)-binding domain"/>
    <property type="match status" value="1"/>
</dbReference>
<dbReference type="InterPro" id="IPR002938">
    <property type="entry name" value="FAD-bd"/>
</dbReference>
<dbReference type="InterPro" id="IPR036188">
    <property type="entry name" value="FAD/NAD-bd_sf"/>
</dbReference>
<dbReference type="InterPro" id="IPR050562">
    <property type="entry name" value="FAD_mOase_fung"/>
</dbReference>
<dbReference type="PANTHER" id="PTHR47356:SF2">
    <property type="entry name" value="FAD-BINDING DOMAIN-CONTAINING PROTEIN-RELATED"/>
    <property type="match status" value="1"/>
</dbReference>
<dbReference type="PANTHER" id="PTHR47356">
    <property type="entry name" value="FAD-DEPENDENT MONOOXYGENASE ASQG-RELATED"/>
    <property type="match status" value="1"/>
</dbReference>
<dbReference type="Pfam" id="PF01494">
    <property type="entry name" value="FAD_binding_3"/>
    <property type="match status" value="1"/>
</dbReference>
<dbReference type="PRINTS" id="PR00420">
    <property type="entry name" value="RNGMNOXGNASE"/>
</dbReference>
<dbReference type="SUPFAM" id="SSF51905">
    <property type="entry name" value="FAD/NAD(P)-binding domain"/>
    <property type="match status" value="1"/>
</dbReference>
<proteinExistence type="inferred from homology"/>
<gene>
    <name evidence="4" type="primary">olcE</name>
</gene>
<evidence type="ECO:0000250" key="1">
    <source>
        <dbReference type="UniProtKB" id="B8M9J8"/>
    </source>
</evidence>
<evidence type="ECO:0000255" key="2"/>
<evidence type="ECO:0000269" key="3">
    <source>
    </source>
</evidence>
<evidence type="ECO:0000303" key="4">
    <source>
    </source>
</evidence>
<evidence type="ECO:0000305" key="5"/>
<evidence type="ECO:0000305" key="6">
    <source>
    </source>
</evidence>
<protein>
    <recommendedName>
        <fullName evidence="4">FAD-dependent monooxygenase olcE</fullName>
        <ecNumber evidence="3">1.-.-.-</ecNumber>
    </recommendedName>
    <alternativeName>
        <fullName evidence="4">15-deoxyoxalicine B biosynthesis cluster protein E</fullName>
    </alternativeName>
</protein>
<comment type="function">
    <text evidence="3 6">FAD-dependent monooxygenase; part of the gene cluster that mediates the biosynthesis of 15-deoxyoxalicine B (PubMed:30090271). The first step of the pathway is the synthesis of nicotinyl-CoA from nicotinic acid by the nicotinic acid-CoA ligase olcI (PubMed:30090271). Nicotinyl-CoA is then a substrate of polyketide synthase olcA to produce 4-hydroxy-6-(3-pyridinyl)-2H-pyran-2-one (HPPO) which is further prenylated by the polyprenyl transferase olcH to yield geranylgeranyl-HPPO (PubMed:30090271). Geranylgeranyl pyrophosphate is provided by the cluster-specific geranylgeranyl pyrophosphate synthase olcC (PubMed:30090271). The FAD-dependent monooxygenase olcE catalyzes the epoxidation of geranylgeranyl-HPPO and the terpene cyclase olcD catalyzes the cyclization of the terpenoid component, resulting in the formation of the tricyclic terpene moiety seen in predecaturin E (PubMed:30090271). The cytochrome P450 monooxygenase then catalyzes the allylic oxidation of predecaturin E, which is followed by spirocylization with concomitant loss of one molecule of water to form decaturin E (PubMed:30090271). Decaturin E is the substrate of the cytochrome P450 monooxygenase olcJ which hydroxylates it at the C-29 position to form decaturin F (PubMed:30090271). The short-chain dehydrogenase/reductase olcF may catalyze the oxidation of decaturin F to generate the 29-hydroxyl-27-one intermediate, and subsequent hemiacetal formation probably leads to the formation of decaturin C (Probable). The dioxygenase olcK may be a peroxisomal enzyme that catalyzes the hydroxylation of decaturin C into decaturin A once decaturin C is shuttled into the peroxisome by the MFS transporter olcL (Probable). Finally the cytochrome P450 monooxygenase olcB catalyzes the oxidative rearrangement to yield 15-deoxyoxalicine B (PubMed:30090271). In the absence of olcJ, decaturin E may be shunted to a pathway in which it is oxidized to a ketone, possibly by olcF, to form decaturin D, which undergoes further allylic oxidation to yield decaturin G (PubMed:30090271). Moreover, in the absence of oclK or oclL, oclB can convert decaturin C into 15-deoxyoxalicine A (PubMed:30090271).</text>
</comment>
<comment type="cofactor">
    <cofactor evidence="5">
        <name>FAD</name>
        <dbReference type="ChEBI" id="CHEBI:57692"/>
    </cofactor>
</comment>
<comment type="pathway">
    <text evidence="3">Secondary metabolite biosynthesis; terpenoid biosynthesis.</text>
</comment>
<comment type="subcellular location">
    <subcellularLocation>
        <location evidence="2">Membrane</location>
        <topology evidence="2">Single-pass membrane protein</topology>
    </subcellularLocation>
</comment>
<comment type="disruption phenotype">
    <text evidence="3">Abolishes the production of 15-deoxyoxalicine B.</text>
</comment>
<comment type="miscellaneous">
    <text evidence="3">The 15-deoxyoxalicine B cluster is a rare cluster that contains its own geranylgeranyl pyrophosphate synthase (olcC), in contrast to other related clusters which rely on a FPP/GGPP synthase localized outside of the cluster.</text>
</comment>
<comment type="similarity">
    <text evidence="5">Belongs to the paxM FAD-dependent monooxygenase family.</text>
</comment>
<reference key="1">
    <citation type="journal article" date="2015" name="Chem. Sci.">
        <title>Genome mining and molecular characterization of the biosynthetic gene cluster of a diterpenic meroterpenoid, 15-deoxyoxalicine B, in Penicillium canescens.</title>
        <authorList>
            <person name="Yaegashi J."/>
            <person name="Romsdahl J."/>
            <person name="Chiang Y.M."/>
            <person name="Wang C.C.C."/>
        </authorList>
    </citation>
    <scope>FUNCTION</scope>
    <scope>DISRUPTION PHENOTYPE</scope>
    <scope>PATHWAY</scope>
</reference>
<reference key="2">
    <citation type="journal article" date="2016" name="Chem. Sci.">
        <title>Correction: Genome mining and molecular characterization of the biosynthetic gene cluster of a diterpenic meroterpenoid, 15-deoxyoxalicine B, in Penicillium canescens.</title>
        <authorList>
            <person name="Yaegashi J."/>
            <person name="Romsdahl J."/>
            <person name="Chiang Y.M."/>
            <person name="Wang C.C.C."/>
        </authorList>
    </citation>
    <scope>ERRATUM OF PUBMED:30090271</scope>
</reference>
<accession>P9WEQ4</accession>
<organism>
    <name type="scientific">Penicillium canescens</name>
    <dbReference type="NCBI Taxonomy" id="5083"/>
    <lineage>
        <taxon>Eukaryota</taxon>
        <taxon>Fungi</taxon>
        <taxon>Dikarya</taxon>
        <taxon>Ascomycota</taxon>
        <taxon>Pezizomycotina</taxon>
        <taxon>Eurotiomycetes</taxon>
        <taxon>Eurotiomycetidae</taxon>
        <taxon>Eurotiales</taxon>
        <taxon>Aspergillaceae</taxon>
        <taxon>Penicillium</taxon>
    </lineage>
</organism>